<reference key="1">
    <citation type="journal article" date="1993" name="Eur. J. Biochem.">
        <title>Molecular cloning and nucleotide sequence of the gene for pyruvate kinase of Bacillus stearothermophilus and the production of the enzyme in Escherichia coli. Evidence that the genes for phosphofructokinase and pyruvate kinase constitute an operon.</title>
        <authorList>
            <person name="Sakai H."/>
            <person name="Ohta T."/>
        </authorList>
    </citation>
    <scope>NUCLEOTIDE SEQUENCE [GENOMIC DNA]</scope>
    <scope>PROTEIN SEQUENCE OF 328-346 AND 393-396</scope>
    <source>
        <strain>ATCC 29609 / DSM 2027 / NCA 1503 / NCIMB 8924</strain>
    </source>
</reference>
<reference key="2">
    <citation type="journal article" date="1992" name="J. Mol. Biol.">
        <title>Key residues in the allosteric transition of Bacillus stearothermophilus pyruvate kinase identified by site-directed mutagenesis.</title>
        <authorList>
            <person name="Walker D."/>
            <person name="Chia W.N."/>
            <person name="Muirhead H."/>
        </authorList>
    </citation>
    <scope>NUCLEOTIDE SEQUENCE [GENOMIC DNA]</scope>
    <scope>PROTEIN SEQUENCE OF 1-51</scope>
    <scope>MUTAGENESIS OF ASP-308 AND TRP-416</scope>
    <source>
        <strain>ATCC 29609 / DSM 2027 / NCA 1503 / NCIMB 8924</strain>
    </source>
</reference>
<reference key="3">
    <citation type="journal article" date="1986" name="J. Biochem.">
        <title>Purification and properties of pyruvate kinase from Bacillus stearothermophilus.</title>
        <authorList>
            <person name="Sakai H."/>
            <person name="Suzuki K."/>
            <person name="Imahori K."/>
        </authorList>
    </citation>
    <scope>FUNCTION</scope>
    <scope>CATALYTIC ACTIVITY</scope>
    <scope>COFACTOR</scope>
    <scope>ACTIVITY REGULATION</scope>
    <scope>BIOPHYSICOCHEMICAL PROPERTIES</scope>
    <scope>SUBUNIT</scope>
</reference>
<reference key="4">
    <citation type="journal article" date="2005" name="J. Biochem.">
        <title>Mutagenesis of the active site lysine 221 of the pyruvate kinase from Bacillus stearothermophilus.</title>
        <authorList>
            <person name="Sakai H."/>
        </authorList>
    </citation>
    <scope>FUNCTION</scope>
    <scope>CATALYTIC ACTIVITY</scope>
    <scope>BIOPHYSICOCHEMICAL PROPERTIES</scope>
    <scope>MUTAGENESIS OF CYS-9; LYS-221 AND CYS-268</scope>
</reference>
<reference key="5">
    <citation type="journal article" date="2005" name="Acta Crystallogr. F">
        <title>Crystallization and preliminary X-ray analysis of pyruvate kinase from Bacillus stearothermophilus.</title>
        <authorList>
            <person name="Suzuki K."/>
            <person name="Ito S."/>
            <person name="Shimizu-Ibuka A."/>
            <person name="Sakai H."/>
        </authorList>
    </citation>
    <scope>CRYSTALLIZATION</scope>
</reference>
<reference evidence="12" key="6">
    <citation type="journal article" date="2008" name="J. Biochem.">
        <title>Crystal structure of pyruvate kinase from Geobacillus stearothermophilus.</title>
        <authorList>
            <person name="Suzuki K."/>
            <person name="Ito S."/>
            <person name="Shimizu-Ibuka A."/>
            <person name="Sakai H."/>
        </authorList>
    </citation>
    <scope>X-RAY CRYSTALLOGRAPHY (2.40 ANGSTROMS) OF MUTANT SER-9/SER-268</scope>
    <scope>SUBUNIT</scope>
    <scope>DOMAIN</scope>
    <scope>MUTAGENESIS OF HIS-425 AND VAL-435</scope>
</reference>
<gene>
    <name type="primary">pyk</name>
</gene>
<comment type="function">
    <text evidence="5 7">Catalyzes the phosphoryl transfer from phosphoenolpyruvate (PEP) to ADP to form pyruvate and ATP (PubMed:15749828, PubMed:3711058). Has a broad specificity for nucleoside diphosphates and can use ADP, GDP, IDP and UDP (PubMed:3711058).</text>
</comment>
<comment type="catalytic activity">
    <reaction evidence="5 7">
        <text>pyruvate + ATP = phosphoenolpyruvate + ADP + H(+)</text>
        <dbReference type="Rhea" id="RHEA:18157"/>
        <dbReference type="ChEBI" id="CHEBI:15361"/>
        <dbReference type="ChEBI" id="CHEBI:15378"/>
        <dbReference type="ChEBI" id="CHEBI:30616"/>
        <dbReference type="ChEBI" id="CHEBI:58702"/>
        <dbReference type="ChEBI" id="CHEBI:456216"/>
        <dbReference type="EC" id="2.7.1.40"/>
    </reaction>
    <physiologicalReaction direction="right-to-left" evidence="5 7">
        <dbReference type="Rhea" id="RHEA:18159"/>
    </physiologicalReaction>
</comment>
<comment type="cofactor">
    <cofactor evidence="7">
        <name>Mg(2+)</name>
        <dbReference type="ChEBI" id="CHEBI:18420"/>
    </cofactor>
    <text evidence="7">Can also use manganese or cobalt.</text>
</comment>
<comment type="cofactor">
    <cofactor evidence="7">
        <name>K(+)</name>
        <dbReference type="ChEBI" id="CHEBI:29103"/>
    </cofactor>
    <text evidence="7">Can also use ammonium ions.</text>
</comment>
<comment type="activity regulation">
    <text evidence="7">Exhibits homotropic positive cooperativity for PEP (PubMed:3711058). Allosterically activated by ribose-5-phosphate, AMP and other nucleoside monophosphates but not by fructose-1,6-bisphosphate (PubMed:3711058).</text>
</comment>
<comment type="biophysicochemical properties">
    <kinetics>
        <KM evidence="5">0.186 mM for PEP (in the presence of 0.1 mM ribose-5-phosphate)</KM>
        <text evidence="5">kcat is 3.204 sec(-1) (in the presence of 0.1 mM ribose-5-phosphate).</text>
    </kinetics>
    <phDependence>
        <text evidence="7">Optimum pH is 7.2 at 30 degrees Celsius. Optimum pH is 6.8 at 60 degrees Celsius.</text>
    </phDependence>
</comment>
<comment type="pathway">
    <text evidence="9">Carbohydrate degradation; glycolysis; pyruvate from D-glyceraldehyde 3-phosphate: step 5/5.</text>
</comment>
<comment type="subunit">
    <text evidence="6 7">Homotetramer.</text>
</comment>
<comment type="domain">
    <text evidence="6">Contains an extra C-terminal sequence (ECTS), which contains a highly conserved PEP binding motif.</text>
</comment>
<comment type="PTM">
    <text evidence="11">The N-terminus is blocked.</text>
</comment>
<comment type="similarity">
    <text evidence="9">Belongs to the pyruvate kinase family.</text>
</comment>
<comment type="similarity">
    <text evidence="9">In the C-terminal section; belongs to the PEP-utilizing enzyme family.</text>
</comment>
<comment type="sequence caution" evidence="9">
    <conflict type="frameshift">
        <sequence resource="EMBL-CDS" id="CAA40994"/>
    </conflict>
</comment>
<protein>
    <recommendedName>
        <fullName evidence="8">Pyruvate kinase</fullName>
        <shortName evidence="9">PK</shortName>
        <ecNumber evidence="5 7">2.7.1.40</ecNumber>
    </recommendedName>
    <alternativeName>
        <fullName evidence="8">ATP:pyruvate 2-O-phosphotransferase</fullName>
    </alternativeName>
</protein>
<sequence length="587" mass="62318">MKRKTKIVCTIGPASESVDKLVQLMEAGMNVARLNFSHGDHEEHGRRIANIREAAKRTGRTVAILLDTKGPEIRTHNMENGAIELKEGSKLVISMSEVLGTPEKISVTYPSLIDDVSVGAKILLDDGLISLEVNAVDKQAGEIVTTVLNGGVLKNKKGVNVPGVKVNLPGITEKDRADILFGIRQGIDFIAASFVRRASDVLEIRELLEAHDALHIQIIAKIENEEGVANIDEILEAADGLMVARGDLGVEIPAEEVPLIQKLLIKKCNMLGKPVITATQMLDSMQRNPRPTRAEASDVANAIFDGTDAVMLSGETAAGQYPVEAVKTMHQIALRTEQALEHRDILSQRTKESQTTITDAIGQSVAHTALNLDVAAIVTPTVSGKTPQMVAKYRPKAPIIAVTSNEAVSRRLALVWGVYTKEAPHVNTTDEMLDVAVDAAVRSGLVKHGDLVVITAGVPVGETGSTNLMKVHVISDLLAKGQGIGRKSAFGKAVVAKTAEEARQKMVDGGILVTVSTDADMMPAIEKAAAIITEEGGLTSHAAVVGLSLGIPVIVGVENATTLFKDGQEITVDGGFGAVYRGHASVL</sequence>
<evidence type="ECO:0000250" key="1">
    <source>
        <dbReference type="UniProtKB" id="P00549"/>
    </source>
</evidence>
<evidence type="ECO:0000250" key="2">
    <source>
        <dbReference type="UniProtKB" id="P14618"/>
    </source>
</evidence>
<evidence type="ECO:0000250" key="3">
    <source>
        <dbReference type="UniProtKB" id="P30613"/>
    </source>
</evidence>
<evidence type="ECO:0000269" key="4">
    <source>
    </source>
</evidence>
<evidence type="ECO:0000269" key="5">
    <source>
    </source>
</evidence>
<evidence type="ECO:0000269" key="6">
    <source>
    </source>
</evidence>
<evidence type="ECO:0000269" key="7">
    <source>
    </source>
</evidence>
<evidence type="ECO:0000303" key="8">
    <source>
    </source>
</evidence>
<evidence type="ECO:0000305" key="9"/>
<evidence type="ECO:0000305" key="10">
    <source>
    </source>
</evidence>
<evidence type="ECO:0000305" key="11">
    <source>
    </source>
</evidence>
<evidence type="ECO:0007744" key="12">
    <source>
        <dbReference type="PDB" id="2E28"/>
    </source>
</evidence>
<evidence type="ECO:0007829" key="13">
    <source>
        <dbReference type="PDB" id="2E28"/>
    </source>
</evidence>
<accession>Q02499</accession>
<keyword id="KW-0002">3D-structure</keyword>
<keyword id="KW-0021">Allosteric enzyme</keyword>
<keyword id="KW-0067">ATP-binding</keyword>
<keyword id="KW-0903">Direct protein sequencing</keyword>
<keyword id="KW-0324">Glycolysis</keyword>
<keyword id="KW-0418">Kinase</keyword>
<keyword id="KW-0460">Magnesium</keyword>
<keyword id="KW-0479">Metal-binding</keyword>
<keyword id="KW-0547">Nucleotide-binding</keyword>
<keyword id="KW-0630">Potassium</keyword>
<keyword id="KW-0670">Pyruvate</keyword>
<keyword id="KW-0808">Transferase</keyword>
<organism>
    <name type="scientific">Geobacillus stearothermophilus</name>
    <name type="common">Bacillus stearothermophilus</name>
    <dbReference type="NCBI Taxonomy" id="1422"/>
    <lineage>
        <taxon>Bacteria</taxon>
        <taxon>Bacillati</taxon>
        <taxon>Bacillota</taxon>
        <taxon>Bacilli</taxon>
        <taxon>Bacillales</taxon>
        <taxon>Anoxybacillaceae</taxon>
        <taxon>Geobacillus</taxon>
    </lineage>
</organism>
<name>KPYK_GEOSE</name>
<dbReference type="EC" id="2.7.1.40" evidence="5 7"/>
<dbReference type="EMBL" id="D13095">
    <property type="protein sequence ID" value="BAA02406.1"/>
    <property type="molecule type" value="Genomic_DNA"/>
</dbReference>
<dbReference type="EMBL" id="X57859">
    <property type="protein sequence ID" value="CAA40994.1"/>
    <property type="status" value="ALT_FRAME"/>
    <property type="molecule type" value="Genomic_DNA"/>
</dbReference>
<dbReference type="PIR" id="S27330">
    <property type="entry name" value="S27330"/>
</dbReference>
<dbReference type="PIR" id="S29783">
    <property type="entry name" value="S29783"/>
</dbReference>
<dbReference type="RefSeq" id="WP_033014443.1">
    <property type="nucleotide sequence ID" value="NZ_RCTK01000004.1"/>
</dbReference>
<dbReference type="PDB" id="2E28">
    <property type="method" value="X-ray"/>
    <property type="resolution" value="2.40 A"/>
    <property type="chains" value="A=1-587"/>
</dbReference>
<dbReference type="PDBsum" id="2E28"/>
<dbReference type="SMR" id="Q02499"/>
<dbReference type="GeneID" id="89612056"/>
<dbReference type="OrthoDB" id="9812123at2"/>
<dbReference type="BRENDA" id="2.7.1.40">
    <property type="organism ID" value="623"/>
</dbReference>
<dbReference type="UniPathway" id="UPA00109">
    <property type="reaction ID" value="UER00188"/>
</dbReference>
<dbReference type="EvolutionaryTrace" id="Q02499"/>
<dbReference type="GO" id="GO:0005524">
    <property type="term" value="F:ATP binding"/>
    <property type="evidence" value="ECO:0007669"/>
    <property type="project" value="UniProtKB-KW"/>
</dbReference>
<dbReference type="GO" id="GO:0016301">
    <property type="term" value="F:kinase activity"/>
    <property type="evidence" value="ECO:0007669"/>
    <property type="project" value="UniProtKB-KW"/>
</dbReference>
<dbReference type="GO" id="GO:0000287">
    <property type="term" value="F:magnesium ion binding"/>
    <property type="evidence" value="ECO:0007669"/>
    <property type="project" value="InterPro"/>
</dbReference>
<dbReference type="GO" id="GO:0030955">
    <property type="term" value="F:potassium ion binding"/>
    <property type="evidence" value="ECO:0007669"/>
    <property type="project" value="InterPro"/>
</dbReference>
<dbReference type="GO" id="GO:0004743">
    <property type="term" value="F:pyruvate kinase activity"/>
    <property type="evidence" value="ECO:0007669"/>
    <property type="project" value="UniProtKB-EC"/>
</dbReference>
<dbReference type="CDD" id="cd00288">
    <property type="entry name" value="Pyruvate_Kinase"/>
    <property type="match status" value="1"/>
</dbReference>
<dbReference type="FunFam" id="2.40.33.10:FF:000001">
    <property type="entry name" value="Pyruvate kinase"/>
    <property type="match status" value="1"/>
</dbReference>
<dbReference type="FunFam" id="3.20.20.60:FF:000001">
    <property type="entry name" value="Pyruvate kinase"/>
    <property type="match status" value="1"/>
</dbReference>
<dbReference type="FunFam" id="3.40.1380.20:FF:000007">
    <property type="entry name" value="Pyruvate kinase"/>
    <property type="match status" value="1"/>
</dbReference>
<dbReference type="FunFam" id="3.50.30.10:FF:000004">
    <property type="entry name" value="Pyruvate kinase"/>
    <property type="match status" value="1"/>
</dbReference>
<dbReference type="Gene3D" id="3.20.20.60">
    <property type="entry name" value="Phosphoenolpyruvate-binding domains"/>
    <property type="match status" value="1"/>
</dbReference>
<dbReference type="Gene3D" id="3.50.30.10">
    <property type="entry name" value="Phosphohistidine domain"/>
    <property type="match status" value="1"/>
</dbReference>
<dbReference type="Gene3D" id="2.40.33.10">
    <property type="entry name" value="PK beta-barrel domain-like"/>
    <property type="match status" value="1"/>
</dbReference>
<dbReference type="Gene3D" id="3.40.1380.20">
    <property type="entry name" value="Pyruvate kinase, C-terminal domain"/>
    <property type="match status" value="1"/>
</dbReference>
<dbReference type="InterPro" id="IPR008279">
    <property type="entry name" value="PEP-util_enz_mobile_dom"/>
</dbReference>
<dbReference type="InterPro" id="IPR036637">
    <property type="entry name" value="Phosphohistidine_dom_sf"/>
</dbReference>
<dbReference type="InterPro" id="IPR001697">
    <property type="entry name" value="Pyr_Knase"/>
</dbReference>
<dbReference type="InterPro" id="IPR015813">
    <property type="entry name" value="Pyrv/PenolPyrv_kinase-like_dom"/>
</dbReference>
<dbReference type="InterPro" id="IPR040442">
    <property type="entry name" value="Pyrv_kinase-like_dom_sf"/>
</dbReference>
<dbReference type="InterPro" id="IPR011037">
    <property type="entry name" value="Pyrv_Knase-like_insert_dom_sf"/>
</dbReference>
<dbReference type="InterPro" id="IPR018209">
    <property type="entry name" value="Pyrv_Knase_AS"/>
</dbReference>
<dbReference type="InterPro" id="IPR015793">
    <property type="entry name" value="Pyrv_Knase_brl"/>
</dbReference>
<dbReference type="InterPro" id="IPR015795">
    <property type="entry name" value="Pyrv_Knase_C"/>
</dbReference>
<dbReference type="InterPro" id="IPR036918">
    <property type="entry name" value="Pyrv_Knase_C_sf"/>
</dbReference>
<dbReference type="InterPro" id="IPR015806">
    <property type="entry name" value="Pyrv_Knase_insert_dom_sf"/>
</dbReference>
<dbReference type="NCBIfam" id="NF004491">
    <property type="entry name" value="PRK05826.1"/>
    <property type="match status" value="1"/>
</dbReference>
<dbReference type="NCBIfam" id="NF004978">
    <property type="entry name" value="PRK06354.1"/>
    <property type="match status" value="1"/>
</dbReference>
<dbReference type="NCBIfam" id="TIGR01064">
    <property type="entry name" value="pyruv_kin"/>
    <property type="match status" value="1"/>
</dbReference>
<dbReference type="PANTHER" id="PTHR11817">
    <property type="entry name" value="PYRUVATE KINASE"/>
    <property type="match status" value="1"/>
</dbReference>
<dbReference type="Pfam" id="PF00391">
    <property type="entry name" value="PEP-utilizers"/>
    <property type="match status" value="1"/>
</dbReference>
<dbReference type="Pfam" id="PF00224">
    <property type="entry name" value="PK"/>
    <property type="match status" value="1"/>
</dbReference>
<dbReference type="Pfam" id="PF02887">
    <property type="entry name" value="PK_C"/>
    <property type="match status" value="1"/>
</dbReference>
<dbReference type="PRINTS" id="PR01050">
    <property type="entry name" value="PYRUVTKNASE"/>
</dbReference>
<dbReference type="SUPFAM" id="SSF51621">
    <property type="entry name" value="Phosphoenolpyruvate/pyruvate domain"/>
    <property type="match status" value="1"/>
</dbReference>
<dbReference type="SUPFAM" id="SSF52009">
    <property type="entry name" value="Phosphohistidine domain"/>
    <property type="match status" value="1"/>
</dbReference>
<dbReference type="SUPFAM" id="SSF50800">
    <property type="entry name" value="PK beta-barrel domain-like"/>
    <property type="match status" value="1"/>
</dbReference>
<dbReference type="SUPFAM" id="SSF52935">
    <property type="entry name" value="PK C-terminal domain-like"/>
    <property type="match status" value="1"/>
</dbReference>
<dbReference type="PROSITE" id="PS00110">
    <property type="entry name" value="PYRUVATE_KINASE"/>
    <property type="match status" value="1"/>
</dbReference>
<proteinExistence type="evidence at protein level"/>
<feature type="chain" id="PRO_0000112055" description="Pyruvate kinase">
    <location>
        <begin position="1"/>
        <end position="587"/>
    </location>
</feature>
<feature type="binding site" evidence="3">
    <location>
        <position position="33"/>
    </location>
    <ligand>
        <name>substrate</name>
    </ligand>
</feature>
<feature type="binding site" evidence="2">
    <location>
        <begin position="35"/>
        <end position="38"/>
    </location>
    <ligand>
        <name>ATP</name>
        <dbReference type="ChEBI" id="CHEBI:30616"/>
    </ligand>
</feature>
<feature type="binding site" evidence="3">
    <location>
        <position position="35"/>
    </location>
    <ligand>
        <name>K(+)</name>
        <dbReference type="ChEBI" id="CHEBI:29103"/>
    </ligand>
</feature>
<feature type="binding site" evidence="3">
    <location>
        <position position="37"/>
    </location>
    <ligand>
        <name>K(+)</name>
        <dbReference type="ChEBI" id="CHEBI:29103"/>
    </ligand>
</feature>
<feature type="binding site" evidence="3">
    <location>
        <position position="67"/>
    </location>
    <ligand>
        <name>K(+)</name>
        <dbReference type="ChEBI" id="CHEBI:29103"/>
    </ligand>
</feature>
<feature type="binding site" evidence="3">
    <location>
        <position position="68"/>
    </location>
    <ligand>
        <name>K(+)</name>
        <dbReference type="ChEBI" id="CHEBI:29103"/>
    </ligand>
</feature>
<feature type="binding site" evidence="2">
    <location>
        <position position="74"/>
    </location>
    <ligand>
        <name>ATP</name>
        <dbReference type="ChEBI" id="CHEBI:30616"/>
    </ligand>
</feature>
<feature type="binding site" evidence="2">
    <location>
        <position position="157"/>
    </location>
    <ligand>
        <name>ATP</name>
        <dbReference type="ChEBI" id="CHEBI:30616"/>
    </ligand>
</feature>
<feature type="binding site" evidence="3">
    <location>
        <position position="221"/>
    </location>
    <ligand>
        <name>substrate</name>
    </ligand>
</feature>
<feature type="binding site" evidence="3">
    <location>
        <position position="223"/>
    </location>
    <ligand>
        <name>Mg(2+)</name>
        <dbReference type="ChEBI" id="CHEBI:18420"/>
    </ligand>
</feature>
<feature type="binding site" evidence="3">
    <location>
        <position position="246"/>
    </location>
    <ligand>
        <name>substrate</name>
    </ligand>
</feature>
<feature type="binding site" evidence="3">
    <location>
        <position position="247"/>
    </location>
    <ligand>
        <name>Mg(2+)</name>
        <dbReference type="ChEBI" id="CHEBI:18420"/>
    </ligand>
</feature>
<feature type="binding site" evidence="3">
    <location>
        <position position="247"/>
    </location>
    <ligand>
        <name>substrate</name>
    </ligand>
</feature>
<feature type="binding site" evidence="3">
    <location>
        <position position="279"/>
    </location>
    <ligand>
        <name>substrate</name>
    </ligand>
</feature>
<feature type="site" description="Transition state stabilizer" evidence="1 10">
    <location>
        <position position="221"/>
    </location>
</feature>
<feature type="mutagenesis site" description="Slight decrease in activity; when associated with S-268." evidence="5">
    <original>C</original>
    <variation>S</variation>
    <location>
        <position position="9"/>
    </location>
</feature>
<feature type="mutagenesis site" description="10000 to 100000-fold decrease in activity." evidence="5">
    <original>K</original>
    <variation>C</variation>
    <variation>D</variation>
    <variation>L</variation>
    <variation>R</variation>
    <location>
        <position position="221"/>
    </location>
</feature>
<feature type="mutagenesis site" description="Slight decrease in activity; when associated with S-9." evidence="5">
    <original>C</original>
    <variation>S</variation>
    <location>
        <position position="268"/>
    </location>
</feature>
<feature type="mutagenesis site" description="Reduced activity; when associated with Y-416." evidence="4">
    <original>D</original>
    <variation>E</variation>
    <location>
        <position position="308"/>
    </location>
</feature>
<feature type="mutagenesis site" description="Increased activity." evidence="4">
    <original>W</original>
    <variation>Y</variation>
    <location>
        <position position="416"/>
    </location>
</feature>
<feature type="mutagenesis site" description="Decreases affinity for allosteric activators." evidence="6">
    <original>H</original>
    <variation>A</variation>
    <location>
        <position position="425"/>
    </location>
</feature>
<feature type="mutagenesis site" description="Does not affect kinetic properties." evidence="6">
    <original>V</original>
    <variation>E</variation>
    <variation>K</variation>
    <variation>R</variation>
    <location>
        <position position="435"/>
    </location>
</feature>
<feature type="strand" evidence="13">
    <location>
        <begin position="5"/>
        <end position="10"/>
    </location>
</feature>
<feature type="turn" evidence="13">
    <location>
        <begin position="13"/>
        <end position="15"/>
    </location>
</feature>
<feature type="helix" evidence="13">
    <location>
        <begin position="18"/>
        <end position="27"/>
    </location>
</feature>
<feature type="strand" evidence="13">
    <location>
        <begin position="29"/>
        <end position="35"/>
    </location>
</feature>
<feature type="helix" evidence="13">
    <location>
        <begin position="41"/>
        <end position="57"/>
    </location>
</feature>
<feature type="strand" evidence="13">
    <location>
        <begin position="63"/>
        <end position="67"/>
    </location>
</feature>
<feature type="strand" evidence="13">
    <location>
        <begin position="90"/>
        <end position="96"/>
    </location>
</feature>
<feature type="strand" evidence="13">
    <location>
        <begin position="102"/>
        <end position="108"/>
    </location>
</feature>
<feature type="turn" evidence="13">
    <location>
        <begin position="113"/>
        <end position="115"/>
    </location>
</feature>
<feature type="strand" evidence="13">
    <location>
        <begin position="121"/>
        <end position="124"/>
    </location>
</feature>
<feature type="turn" evidence="13">
    <location>
        <begin position="125"/>
        <end position="128"/>
    </location>
</feature>
<feature type="strand" evidence="13">
    <location>
        <begin position="129"/>
        <end position="137"/>
    </location>
</feature>
<feature type="turn" evidence="13">
    <location>
        <begin position="138"/>
        <end position="141"/>
    </location>
</feature>
<feature type="strand" evidence="13">
    <location>
        <begin position="142"/>
        <end position="146"/>
    </location>
</feature>
<feature type="strand" evidence="13">
    <location>
        <begin position="158"/>
        <end position="160"/>
    </location>
</feature>
<feature type="helix" evidence="13">
    <location>
        <begin position="173"/>
        <end position="185"/>
    </location>
</feature>
<feature type="strand" evidence="13">
    <location>
        <begin position="188"/>
        <end position="194"/>
    </location>
</feature>
<feature type="helix" evidence="13">
    <location>
        <begin position="198"/>
        <end position="210"/>
    </location>
</feature>
<feature type="strand" evidence="13">
    <location>
        <begin position="216"/>
        <end position="222"/>
    </location>
</feature>
<feature type="helix" evidence="13">
    <location>
        <begin position="225"/>
        <end position="229"/>
    </location>
</feature>
<feature type="helix" evidence="13">
    <location>
        <begin position="231"/>
        <end position="237"/>
    </location>
</feature>
<feature type="strand" evidence="13">
    <location>
        <begin position="238"/>
        <end position="244"/>
    </location>
</feature>
<feature type="helix" evidence="13">
    <location>
        <begin position="245"/>
        <end position="251"/>
    </location>
</feature>
<feature type="helix" evidence="13">
    <location>
        <begin position="254"/>
        <end position="256"/>
    </location>
</feature>
<feature type="helix" evidence="13">
    <location>
        <begin position="257"/>
        <end position="271"/>
    </location>
</feature>
<feature type="strand" evidence="13">
    <location>
        <begin position="275"/>
        <end position="282"/>
    </location>
</feature>
<feature type="helix" evidence="13">
    <location>
        <begin position="283"/>
        <end position="286"/>
    </location>
</feature>
<feature type="helix" evidence="13">
    <location>
        <begin position="293"/>
        <end position="305"/>
    </location>
</feature>
<feature type="strand" evidence="13">
    <location>
        <begin position="308"/>
        <end position="313"/>
    </location>
</feature>
<feature type="helix" evidence="13">
    <location>
        <begin position="314"/>
        <end position="317"/>
    </location>
</feature>
<feature type="helix" evidence="13">
    <location>
        <begin position="322"/>
        <end position="337"/>
    </location>
</feature>
<feature type="helix" evidence="13">
    <location>
        <begin position="342"/>
        <end position="350"/>
    </location>
</feature>
<feature type="helix" evidence="13">
    <location>
        <begin position="357"/>
        <end position="371"/>
    </location>
</feature>
<feature type="strand" evidence="13">
    <location>
        <begin position="375"/>
        <end position="380"/>
    </location>
</feature>
<feature type="strand" evidence="13">
    <location>
        <begin position="382"/>
        <end position="384"/>
    </location>
</feature>
<feature type="helix" evidence="13">
    <location>
        <begin position="385"/>
        <end position="392"/>
    </location>
</feature>
<feature type="strand" evidence="13">
    <location>
        <begin position="399"/>
        <end position="405"/>
    </location>
</feature>
<feature type="helix" evidence="13">
    <location>
        <begin position="406"/>
        <end position="411"/>
    </location>
</feature>
<feature type="helix" evidence="13">
    <location>
        <begin position="412"/>
        <end position="414"/>
    </location>
</feature>
<feature type="strand" evidence="13">
    <location>
        <begin position="418"/>
        <end position="422"/>
    </location>
</feature>
<feature type="helix" evidence="13">
    <location>
        <begin position="429"/>
        <end position="443"/>
    </location>
</feature>
<feature type="strand" evidence="13">
    <location>
        <begin position="451"/>
        <end position="456"/>
    </location>
</feature>
<feature type="strand" evidence="13">
    <location>
        <begin position="468"/>
        <end position="473"/>
    </location>
</feature>
<feature type="strand" evidence="13">
    <location>
        <begin position="477"/>
        <end position="480"/>
    </location>
</feature>
<feature type="strand" evidence="13">
    <location>
        <begin position="482"/>
        <end position="486"/>
    </location>
</feature>
<feature type="strand" evidence="13">
    <location>
        <begin position="492"/>
        <end position="495"/>
    </location>
</feature>
<feature type="helix" evidence="13">
    <location>
        <begin position="499"/>
        <end position="505"/>
    </location>
</feature>
<feature type="strand" evidence="13">
    <location>
        <begin position="511"/>
        <end position="515"/>
    </location>
</feature>
<feature type="helix" evidence="13">
    <location>
        <begin position="519"/>
        <end position="521"/>
    </location>
</feature>
<feature type="helix" evidence="13">
    <location>
        <begin position="522"/>
        <end position="525"/>
    </location>
</feature>
<feature type="strand" evidence="13">
    <location>
        <begin position="529"/>
        <end position="535"/>
    </location>
</feature>
<feature type="helix" evidence="13">
    <location>
        <begin position="541"/>
        <end position="549"/>
    </location>
</feature>
<feature type="strand" evidence="13">
    <location>
        <begin position="553"/>
        <end position="555"/>
    </location>
</feature>
<feature type="helix" evidence="13">
    <location>
        <begin position="560"/>
        <end position="563"/>
    </location>
</feature>
<feature type="strand" evidence="13">
    <location>
        <begin position="569"/>
        <end position="573"/>
    </location>
</feature>
<feature type="turn" evidence="13">
    <location>
        <begin position="574"/>
        <end position="577"/>
    </location>
</feature>
<feature type="strand" evidence="13">
    <location>
        <begin position="578"/>
        <end position="582"/>
    </location>
</feature>